<gene>
    <name evidence="1" type="primary">cmk</name>
    <name type="ordered locus">BSUIS_A0028</name>
</gene>
<comment type="catalytic activity">
    <reaction evidence="1">
        <text>CMP + ATP = CDP + ADP</text>
        <dbReference type="Rhea" id="RHEA:11600"/>
        <dbReference type="ChEBI" id="CHEBI:30616"/>
        <dbReference type="ChEBI" id="CHEBI:58069"/>
        <dbReference type="ChEBI" id="CHEBI:60377"/>
        <dbReference type="ChEBI" id="CHEBI:456216"/>
        <dbReference type="EC" id="2.7.4.25"/>
    </reaction>
</comment>
<comment type="catalytic activity">
    <reaction evidence="1">
        <text>dCMP + ATP = dCDP + ADP</text>
        <dbReference type="Rhea" id="RHEA:25094"/>
        <dbReference type="ChEBI" id="CHEBI:30616"/>
        <dbReference type="ChEBI" id="CHEBI:57566"/>
        <dbReference type="ChEBI" id="CHEBI:58593"/>
        <dbReference type="ChEBI" id="CHEBI:456216"/>
        <dbReference type="EC" id="2.7.4.25"/>
    </reaction>
</comment>
<comment type="subcellular location">
    <subcellularLocation>
        <location evidence="1">Cytoplasm</location>
    </subcellularLocation>
</comment>
<comment type="similarity">
    <text evidence="1">Belongs to the cytidylate kinase family. Type 1 subfamily.</text>
</comment>
<accession>B0CI46</accession>
<reference key="1">
    <citation type="submission" date="2007-12" db="EMBL/GenBank/DDBJ databases">
        <title>Brucella suis ATCC 23445 whole genome shotgun sequencing project.</title>
        <authorList>
            <person name="Setubal J.C."/>
            <person name="Bowns C."/>
            <person name="Boyle S."/>
            <person name="Crasta O.R."/>
            <person name="Czar M.J."/>
            <person name="Dharmanolla C."/>
            <person name="Gillespie J.J."/>
            <person name="Kenyon R.W."/>
            <person name="Lu J."/>
            <person name="Mane S."/>
            <person name="Mohapatra S."/>
            <person name="Nagrani S."/>
            <person name="Purkayastha A."/>
            <person name="Rajasimha H.K."/>
            <person name="Shallom J.M."/>
            <person name="Shallom S."/>
            <person name="Shukla M."/>
            <person name="Snyder E.E."/>
            <person name="Sobral B.W."/>
            <person name="Wattam A.R."/>
            <person name="Will R."/>
            <person name="Williams K."/>
            <person name="Yoo H."/>
            <person name="Bruce D."/>
            <person name="Detter C."/>
            <person name="Munk C."/>
            <person name="Brettin T.S."/>
        </authorList>
    </citation>
    <scope>NUCLEOTIDE SEQUENCE [LARGE SCALE GENOMIC DNA]</scope>
    <source>
        <strain>ATCC 23445 / NCTC 10510</strain>
    </source>
</reference>
<feature type="chain" id="PRO_1000078333" description="Cytidylate kinase">
    <location>
        <begin position="1"/>
        <end position="219"/>
    </location>
</feature>
<feature type="binding site" evidence="1">
    <location>
        <begin position="15"/>
        <end position="23"/>
    </location>
    <ligand>
        <name>ATP</name>
        <dbReference type="ChEBI" id="CHEBI:30616"/>
    </ligand>
</feature>
<organism>
    <name type="scientific">Brucella suis (strain ATCC 23445 / NCTC 10510)</name>
    <dbReference type="NCBI Taxonomy" id="470137"/>
    <lineage>
        <taxon>Bacteria</taxon>
        <taxon>Pseudomonadati</taxon>
        <taxon>Pseudomonadota</taxon>
        <taxon>Alphaproteobacteria</taxon>
        <taxon>Hyphomicrobiales</taxon>
        <taxon>Brucellaceae</taxon>
        <taxon>Brucella/Ochrobactrum group</taxon>
        <taxon>Brucella</taxon>
    </lineage>
</organism>
<keyword id="KW-0067">ATP-binding</keyword>
<keyword id="KW-0963">Cytoplasm</keyword>
<keyword id="KW-0418">Kinase</keyword>
<keyword id="KW-0547">Nucleotide-binding</keyword>
<keyword id="KW-0808">Transferase</keyword>
<dbReference type="EC" id="2.7.4.25" evidence="1"/>
<dbReference type="EMBL" id="CP000911">
    <property type="protein sequence ID" value="ABY37136.1"/>
    <property type="molecule type" value="Genomic_DNA"/>
</dbReference>
<dbReference type="RefSeq" id="WP_004685325.1">
    <property type="nucleotide sequence ID" value="NC_010169.1"/>
</dbReference>
<dbReference type="SMR" id="B0CI46"/>
<dbReference type="GeneID" id="97534537"/>
<dbReference type="KEGG" id="bmt:BSUIS_A0028"/>
<dbReference type="HOGENOM" id="CLU_079959_0_1_5"/>
<dbReference type="Proteomes" id="UP000008545">
    <property type="component" value="Chromosome I"/>
</dbReference>
<dbReference type="GO" id="GO:0005737">
    <property type="term" value="C:cytoplasm"/>
    <property type="evidence" value="ECO:0007669"/>
    <property type="project" value="UniProtKB-SubCell"/>
</dbReference>
<dbReference type="GO" id="GO:0005524">
    <property type="term" value="F:ATP binding"/>
    <property type="evidence" value="ECO:0007669"/>
    <property type="project" value="UniProtKB-UniRule"/>
</dbReference>
<dbReference type="GO" id="GO:0036430">
    <property type="term" value="F:CMP kinase activity"/>
    <property type="evidence" value="ECO:0007669"/>
    <property type="project" value="RHEA"/>
</dbReference>
<dbReference type="GO" id="GO:0036431">
    <property type="term" value="F:dCMP kinase activity"/>
    <property type="evidence" value="ECO:0007669"/>
    <property type="project" value="RHEA"/>
</dbReference>
<dbReference type="GO" id="GO:0006220">
    <property type="term" value="P:pyrimidine nucleotide metabolic process"/>
    <property type="evidence" value="ECO:0007669"/>
    <property type="project" value="UniProtKB-UniRule"/>
</dbReference>
<dbReference type="CDD" id="cd02020">
    <property type="entry name" value="CMPK"/>
    <property type="match status" value="1"/>
</dbReference>
<dbReference type="Gene3D" id="3.40.50.300">
    <property type="entry name" value="P-loop containing nucleotide triphosphate hydrolases"/>
    <property type="match status" value="1"/>
</dbReference>
<dbReference type="HAMAP" id="MF_00238">
    <property type="entry name" value="Cytidyl_kinase_type1"/>
    <property type="match status" value="1"/>
</dbReference>
<dbReference type="InterPro" id="IPR003136">
    <property type="entry name" value="Cytidylate_kin"/>
</dbReference>
<dbReference type="InterPro" id="IPR011994">
    <property type="entry name" value="Cytidylate_kinase_dom"/>
</dbReference>
<dbReference type="InterPro" id="IPR027417">
    <property type="entry name" value="P-loop_NTPase"/>
</dbReference>
<dbReference type="NCBIfam" id="TIGR00017">
    <property type="entry name" value="cmk"/>
    <property type="match status" value="1"/>
</dbReference>
<dbReference type="Pfam" id="PF02224">
    <property type="entry name" value="Cytidylate_kin"/>
    <property type="match status" value="1"/>
</dbReference>
<dbReference type="SUPFAM" id="SSF52540">
    <property type="entry name" value="P-loop containing nucleoside triphosphate hydrolases"/>
    <property type="match status" value="1"/>
</dbReference>
<sequence length="219" mass="23412">MKSFVVAPFIVAIDGPAASGKGTLARRIATHYGMPHLDTGLTYRAVAKALLDKGLPLDDEALATDAALSLDLLAMDKAVLSAHAIGEAASKVAVMPAVRRALVEAQRHFANALPSSVLDGRDIGTVVCPDAAIKLFVTASPEVRARRRFDEVLARGDTADFAEILADLKKRDERDMNRTDSPLRPAEDAHLLDTSEMSIEAAFLAAKKLIDHALAQHRG</sequence>
<proteinExistence type="inferred from homology"/>
<protein>
    <recommendedName>
        <fullName evidence="1">Cytidylate kinase</fullName>
        <shortName evidence="1">CK</shortName>
        <ecNumber evidence="1">2.7.4.25</ecNumber>
    </recommendedName>
    <alternativeName>
        <fullName evidence="1">Cytidine monophosphate kinase</fullName>
        <shortName evidence="1">CMP kinase</shortName>
    </alternativeName>
</protein>
<name>KCY_BRUSI</name>
<evidence type="ECO:0000255" key="1">
    <source>
        <dbReference type="HAMAP-Rule" id="MF_00238"/>
    </source>
</evidence>